<evidence type="ECO:0000255" key="1">
    <source>
        <dbReference type="HAMAP-Rule" id="MF_02005"/>
    </source>
</evidence>
<accession>Q9UY55</accession>
<accession>G8ZK14</accession>
<keyword id="KW-0030">Aminoacyl-tRNA synthetase</keyword>
<keyword id="KW-0067">ATP-binding</keyword>
<keyword id="KW-0963">Cytoplasm</keyword>
<keyword id="KW-0436">Ligase</keyword>
<keyword id="KW-0547">Nucleotide-binding</keyword>
<keyword id="KW-0648">Protein biosynthesis</keyword>
<sequence>MLPKKYDPNEIEPKWQKYWLEEKIYKYRLDENKPSYAIDTPPPFTSGTLHLGHVLSHTWIDIIARYKRMRGYNVLFPQGFDNHGLPTELKVEKEFGITKDQPEEFLKKCVEWTWQAIEAMRKQFIRIGYSADWDLEYHTMDDWYKAAVQKSLLEFYKKGLIYREEHPVYWCPKCRTSLAKAEVGYVEEEGYLYYIKLPLADGSGYIPIATTRPELMPACVAVFVHPDDERYKHLVGKKVKLPIYEREVPILADEDVDPNFGTGAVYNCTYGDEQDIVWQKRYNLPVIIAINEDGTMNENAGPYAGLKVEEARKKIAEDLEKMGLLYKKEKIKHRVLRHTERSSCMAPIELLPKKQWFIRVKDFTDEIVKVAKEINWYPEDMFLRLKDWAESMDWDWVISRQRVFGTPFPFWVCKNGHIIPAREEDLPVDPRFDKPPVEKCPVCGAEIEPVTDVLDCWVDSSITPLIITRWHEAIKGDEEAKKWFEHNFPTALRPQGTDIIRTWAFYTIFRTFKLTGKKPWKDIVINGMVAGPDGRKMSKSYGNVVAPDEVIPKYGADALRLWTALAPPGEDHPFKWETVDYNFRFLQKVWNIYRFAERHIKDFDYEKYKDIELEPLDRWILSRLHRIIKFATEELERYRFNLITRELMTFIWHEVADDYIEMVKYRLYGDDEESKLKAKVALYELLYNVMLLLAPFVPHITEEIYHAMFKDKIGEKSVHLLSWPEYREDRIDEKAEKLGELARKVVSEMRKYKNSHGMPLNAKLEHVAIYALESYDDLKLIEKDIAGTMNIEKLEIFKGEPQLEERIVEVKPNYKRIGPRYGKLVPRIVEHLKNNAESIAREIKENGKVEFEIDGEKVELTKEDVMIKKEVFSEGERVETAVVDDIVILFF</sequence>
<gene>
    <name evidence="1" type="primary">valS</name>
    <name type="ordered locus">PYRAB16530</name>
    <name type="ORF">PAB1255</name>
</gene>
<name>SYV_PYRAB</name>
<feature type="chain" id="PRO_0000106251" description="Valine--tRNA ligase">
    <location>
        <begin position="1"/>
        <end position="891"/>
    </location>
</feature>
<feature type="short sequence motif" description="'HIGH' region">
    <location>
        <begin position="43"/>
        <end position="53"/>
    </location>
</feature>
<feature type="short sequence motif" description="'KMSKS' region">
    <location>
        <begin position="536"/>
        <end position="540"/>
    </location>
</feature>
<feature type="binding site" evidence="1">
    <location>
        <position position="539"/>
    </location>
    <ligand>
        <name>ATP</name>
        <dbReference type="ChEBI" id="CHEBI:30616"/>
    </ligand>
</feature>
<proteinExistence type="inferred from homology"/>
<reference key="1">
    <citation type="journal article" date="2003" name="Mol. Microbiol.">
        <title>An integrated analysis of the genome of the hyperthermophilic archaeon Pyrococcus abyssi.</title>
        <authorList>
            <person name="Cohen G.N."/>
            <person name="Barbe V."/>
            <person name="Flament D."/>
            <person name="Galperin M."/>
            <person name="Heilig R."/>
            <person name="Lecompte O."/>
            <person name="Poch O."/>
            <person name="Prieur D."/>
            <person name="Querellou J."/>
            <person name="Ripp R."/>
            <person name="Thierry J.-C."/>
            <person name="Van der Oost J."/>
            <person name="Weissenbach J."/>
            <person name="Zivanovic Y."/>
            <person name="Forterre P."/>
        </authorList>
    </citation>
    <scope>NUCLEOTIDE SEQUENCE [LARGE SCALE GENOMIC DNA]</scope>
    <source>
        <strain>GE5 / Orsay</strain>
    </source>
</reference>
<reference key="2">
    <citation type="journal article" date="2012" name="Curr. Microbiol.">
        <title>Re-annotation of two hyperthermophilic archaea Pyrococcus abyssi GE5 and Pyrococcus furiosus DSM 3638.</title>
        <authorList>
            <person name="Gao J."/>
            <person name="Wang J."/>
        </authorList>
    </citation>
    <scope>GENOME REANNOTATION</scope>
    <source>
        <strain>GE5 / Orsay</strain>
    </source>
</reference>
<protein>
    <recommendedName>
        <fullName evidence="1">Valine--tRNA ligase</fullName>
        <ecNumber evidence="1">6.1.1.9</ecNumber>
    </recommendedName>
    <alternativeName>
        <fullName evidence="1">Valyl-tRNA synthetase</fullName>
        <shortName evidence="1">ValRS</shortName>
    </alternativeName>
</protein>
<organism>
    <name type="scientific">Pyrococcus abyssi (strain GE5 / Orsay)</name>
    <dbReference type="NCBI Taxonomy" id="272844"/>
    <lineage>
        <taxon>Archaea</taxon>
        <taxon>Methanobacteriati</taxon>
        <taxon>Methanobacteriota</taxon>
        <taxon>Thermococci</taxon>
        <taxon>Thermococcales</taxon>
        <taxon>Thermococcaceae</taxon>
        <taxon>Pyrococcus</taxon>
    </lineage>
</organism>
<dbReference type="EC" id="6.1.1.9" evidence="1"/>
<dbReference type="EMBL" id="AJ248288">
    <property type="protein sequence ID" value="CAB50557.1"/>
    <property type="molecule type" value="Genomic_DNA"/>
</dbReference>
<dbReference type="EMBL" id="HE613800">
    <property type="protein sequence ID" value="CCE71121.1"/>
    <property type="molecule type" value="Genomic_DNA"/>
</dbReference>
<dbReference type="PIR" id="G75014">
    <property type="entry name" value="G75014"/>
</dbReference>
<dbReference type="RefSeq" id="WP_010868771.1">
    <property type="nucleotide sequence ID" value="NC_000868.1"/>
</dbReference>
<dbReference type="SMR" id="Q9UY55"/>
<dbReference type="STRING" id="272844.PAB1255"/>
<dbReference type="KEGG" id="pab:PAB1255"/>
<dbReference type="PATRIC" id="fig|272844.11.peg.1767"/>
<dbReference type="eggNOG" id="arCOG00808">
    <property type="taxonomic scope" value="Archaea"/>
</dbReference>
<dbReference type="HOGENOM" id="CLU_001493_0_2_2"/>
<dbReference type="OrthoDB" id="23906at2157"/>
<dbReference type="PhylomeDB" id="Q9UY55"/>
<dbReference type="Proteomes" id="UP000000810">
    <property type="component" value="Chromosome"/>
</dbReference>
<dbReference type="Proteomes" id="UP000009139">
    <property type="component" value="Chromosome"/>
</dbReference>
<dbReference type="GO" id="GO:0005829">
    <property type="term" value="C:cytosol"/>
    <property type="evidence" value="ECO:0007669"/>
    <property type="project" value="TreeGrafter"/>
</dbReference>
<dbReference type="GO" id="GO:0002161">
    <property type="term" value="F:aminoacyl-tRNA deacylase activity"/>
    <property type="evidence" value="ECO:0007669"/>
    <property type="project" value="InterPro"/>
</dbReference>
<dbReference type="GO" id="GO:0005524">
    <property type="term" value="F:ATP binding"/>
    <property type="evidence" value="ECO:0007669"/>
    <property type="project" value="UniProtKB-UniRule"/>
</dbReference>
<dbReference type="GO" id="GO:0004832">
    <property type="term" value="F:valine-tRNA ligase activity"/>
    <property type="evidence" value="ECO:0007669"/>
    <property type="project" value="UniProtKB-UniRule"/>
</dbReference>
<dbReference type="GO" id="GO:0006438">
    <property type="term" value="P:valyl-tRNA aminoacylation"/>
    <property type="evidence" value="ECO:0007669"/>
    <property type="project" value="UniProtKB-UniRule"/>
</dbReference>
<dbReference type="CDD" id="cd07962">
    <property type="entry name" value="Anticodon_Ia_Val"/>
    <property type="match status" value="1"/>
</dbReference>
<dbReference type="CDD" id="cd00817">
    <property type="entry name" value="ValRS_core"/>
    <property type="match status" value="1"/>
</dbReference>
<dbReference type="FunFam" id="3.30.720.200:FF:000001">
    <property type="entry name" value="Glycine--tRNA ligase 2"/>
    <property type="match status" value="1"/>
</dbReference>
<dbReference type="FunFam" id="1.10.730.10:FF:000033">
    <property type="entry name" value="Valine--tRNA ligase"/>
    <property type="match status" value="1"/>
</dbReference>
<dbReference type="FunFam" id="3.40.50.620:FF:000192">
    <property type="entry name" value="Valine--tRNA ligase"/>
    <property type="match status" value="1"/>
</dbReference>
<dbReference type="Gene3D" id="3.30.720.200">
    <property type="match status" value="1"/>
</dbReference>
<dbReference type="Gene3D" id="3.40.50.620">
    <property type="entry name" value="HUPs"/>
    <property type="match status" value="2"/>
</dbReference>
<dbReference type="Gene3D" id="1.10.730.10">
    <property type="entry name" value="Isoleucyl-tRNA Synthetase, Domain 1"/>
    <property type="match status" value="1"/>
</dbReference>
<dbReference type="Gene3D" id="3.90.740.10">
    <property type="entry name" value="Valyl/Leucyl/Isoleucyl-tRNA synthetase, editing domain"/>
    <property type="match status" value="1"/>
</dbReference>
<dbReference type="HAMAP" id="MF_02005">
    <property type="entry name" value="Val_tRNA_synth_type2"/>
    <property type="match status" value="1"/>
</dbReference>
<dbReference type="InterPro" id="IPR001412">
    <property type="entry name" value="aa-tRNA-synth_I_CS"/>
</dbReference>
<dbReference type="InterPro" id="IPR002300">
    <property type="entry name" value="aa-tRNA-synth_Ia"/>
</dbReference>
<dbReference type="InterPro" id="IPR033705">
    <property type="entry name" value="Anticodon_Ia_Val"/>
</dbReference>
<dbReference type="InterPro" id="IPR013155">
    <property type="entry name" value="M/V/L/I-tRNA-synth_anticd-bd"/>
</dbReference>
<dbReference type="InterPro" id="IPR014729">
    <property type="entry name" value="Rossmann-like_a/b/a_fold"/>
</dbReference>
<dbReference type="InterPro" id="IPR009080">
    <property type="entry name" value="tRNAsynth_Ia_anticodon-bd"/>
</dbReference>
<dbReference type="InterPro" id="IPR009008">
    <property type="entry name" value="Val/Leu/Ile-tRNA-synth_edit"/>
</dbReference>
<dbReference type="InterPro" id="IPR022874">
    <property type="entry name" value="Valine-tRNA_ligase_type_2"/>
</dbReference>
<dbReference type="InterPro" id="IPR002303">
    <property type="entry name" value="Valyl-tRNA_ligase"/>
</dbReference>
<dbReference type="NCBIfam" id="NF009687">
    <property type="entry name" value="PRK13208.1"/>
    <property type="match status" value="1"/>
</dbReference>
<dbReference type="NCBIfam" id="TIGR00422">
    <property type="entry name" value="valS"/>
    <property type="match status" value="1"/>
</dbReference>
<dbReference type="PANTHER" id="PTHR11946:SF93">
    <property type="entry name" value="VALINE--TRNA LIGASE, CHLOROPLASTIC_MITOCHONDRIAL 2"/>
    <property type="match status" value="1"/>
</dbReference>
<dbReference type="PANTHER" id="PTHR11946">
    <property type="entry name" value="VALYL-TRNA SYNTHETASES"/>
    <property type="match status" value="1"/>
</dbReference>
<dbReference type="Pfam" id="PF08264">
    <property type="entry name" value="Anticodon_1"/>
    <property type="match status" value="1"/>
</dbReference>
<dbReference type="Pfam" id="PF19302">
    <property type="entry name" value="DUF5915"/>
    <property type="match status" value="1"/>
</dbReference>
<dbReference type="Pfam" id="PF00133">
    <property type="entry name" value="tRNA-synt_1"/>
    <property type="match status" value="1"/>
</dbReference>
<dbReference type="PRINTS" id="PR00986">
    <property type="entry name" value="TRNASYNTHVAL"/>
</dbReference>
<dbReference type="SUPFAM" id="SSF47323">
    <property type="entry name" value="Anticodon-binding domain of a subclass of class I aminoacyl-tRNA synthetases"/>
    <property type="match status" value="1"/>
</dbReference>
<dbReference type="SUPFAM" id="SSF52374">
    <property type="entry name" value="Nucleotidylyl transferase"/>
    <property type="match status" value="1"/>
</dbReference>
<dbReference type="SUPFAM" id="SSF50677">
    <property type="entry name" value="ValRS/IleRS/LeuRS editing domain"/>
    <property type="match status" value="1"/>
</dbReference>
<dbReference type="PROSITE" id="PS00178">
    <property type="entry name" value="AA_TRNA_LIGASE_I"/>
    <property type="match status" value="1"/>
</dbReference>
<comment type="function">
    <text evidence="1">Catalyzes the attachment of valine to tRNA(Val). As ValRS can inadvertently accommodate and process structurally similar amino acids such as threonine, to avoid such errors, it has a 'posttransfer' editing activity that hydrolyzes mischarged Thr-tRNA(Val) in a tRNA-dependent manner.</text>
</comment>
<comment type="catalytic activity">
    <reaction evidence="1">
        <text>tRNA(Val) + L-valine + ATP = L-valyl-tRNA(Val) + AMP + diphosphate</text>
        <dbReference type="Rhea" id="RHEA:10704"/>
        <dbReference type="Rhea" id="RHEA-COMP:9672"/>
        <dbReference type="Rhea" id="RHEA-COMP:9708"/>
        <dbReference type="ChEBI" id="CHEBI:30616"/>
        <dbReference type="ChEBI" id="CHEBI:33019"/>
        <dbReference type="ChEBI" id="CHEBI:57762"/>
        <dbReference type="ChEBI" id="CHEBI:78442"/>
        <dbReference type="ChEBI" id="CHEBI:78537"/>
        <dbReference type="ChEBI" id="CHEBI:456215"/>
        <dbReference type="EC" id="6.1.1.9"/>
    </reaction>
</comment>
<comment type="subcellular location">
    <subcellularLocation>
        <location evidence="1">Cytoplasm</location>
    </subcellularLocation>
</comment>
<comment type="domain">
    <text evidence="1">ValRS has two distinct active sites: one for aminoacylation and one for editing. The misactivated threonine is translocated from the active site to the editing site.</text>
</comment>
<comment type="similarity">
    <text evidence="1">Belongs to the class-I aminoacyl-tRNA synthetase family. ValS type 2 subfamily.</text>
</comment>